<evidence type="ECO:0000255" key="1">
    <source>
        <dbReference type="HAMAP-Rule" id="MF_00565"/>
    </source>
</evidence>
<protein>
    <recommendedName>
        <fullName evidence="1">D-alanyl carrier protein</fullName>
        <shortName evidence="1">DCP</shortName>
    </recommendedName>
    <alternativeName>
        <fullName evidence="1">D-alanine--poly(phosphoribitol) ligase subunit 2</fullName>
    </alternativeName>
</protein>
<reference key="1">
    <citation type="journal article" date="2010" name="Genome Biol.">
        <title>Structure and dynamics of the pan-genome of Streptococcus pneumoniae and closely related species.</title>
        <authorList>
            <person name="Donati C."/>
            <person name="Hiller N.L."/>
            <person name="Tettelin H."/>
            <person name="Muzzi A."/>
            <person name="Croucher N.J."/>
            <person name="Angiuoli S.V."/>
            <person name="Oggioni M."/>
            <person name="Dunning Hotopp J.C."/>
            <person name="Hu F.Z."/>
            <person name="Riley D.R."/>
            <person name="Covacci A."/>
            <person name="Mitchell T.J."/>
            <person name="Bentley S.D."/>
            <person name="Kilian M."/>
            <person name="Ehrlich G.D."/>
            <person name="Rappuoli R."/>
            <person name="Moxon E.R."/>
            <person name="Masignani V."/>
        </authorList>
    </citation>
    <scope>NUCLEOTIDE SEQUENCE [LARGE SCALE GENOMIC DNA]</scope>
    <source>
        <strain>Taiwan19F-14</strain>
    </source>
</reference>
<name>DLTC_STRZT</name>
<feature type="chain" id="PRO_1000146802" description="D-alanyl carrier protein">
    <location>
        <begin position="1"/>
        <end position="79"/>
    </location>
</feature>
<feature type="domain" description="Carrier" evidence="1">
    <location>
        <begin position="1"/>
        <end position="77"/>
    </location>
</feature>
<feature type="modified residue" description="O-(pantetheine 4'-phosphoryl)serine" evidence="1">
    <location>
        <position position="35"/>
    </location>
</feature>
<sequence>MDIKSEVIEIIDELFMEDVSDMMDEDLFDAGVLDSMGTVELIVEIENRFDIRVPVTEFGRDDWNTANKIIAGIVELQNA</sequence>
<dbReference type="EMBL" id="CP000921">
    <property type="protein sequence ID" value="ACO23905.1"/>
    <property type="molecule type" value="Genomic_DNA"/>
</dbReference>
<dbReference type="RefSeq" id="WP_000351967.1">
    <property type="nucleotide sequence ID" value="NC_012469.1"/>
</dbReference>
<dbReference type="SMR" id="C1CU93"/>
<dbReference type="GeneID" id="93738863"/>
<dbReference type="KEGG" id="snt:SPT_2189"/>
<dbReference type="HOGENOM" id="CLU_108696_19_0_9"/>
<dbReference type="UniPathway" id="UPA00556"/>
<dbReference type="GO" id="GO:0005737">
    <property type="term" value="C:cytoplasm"/>
    <property type="evidence" value="ECO:0007669"/>
    <property type="project" value="UniProtKB-SubCell"/>
</dbReference>
<dbReference type="GO" id="GO:0036370">
    <property type="term" value="F:D-alanyl carrier activity"/>
    <property type="evidence" value="ECO:0007669"/>
    <property type="project" value="UniProtKB-UniRule"/>
</dbReference>
<dbReference type="GO" id="GO:0071555">
    <property type="term" value="P:cell wall organization"/>
    <property type="evidence" value="ECO:0007669"/>
    <property type="project" value="UniProtKB-KW"/>
</dbReference>
<dbReference type="GO" id="GO:0070395">
    <property type="term" value="P:lipoteichoic acid biosynthetic process"/>
    <property type="evidence" value="ECO:0007669"/>
    <property type="project" value="UniProtKB-UniRule"/>
</dbReference>
<dbReference type="Gene3D" id="1.10.1200.10">
    <property type="entry name" value="ACP-like"/>
    <property type="match status" value="1"/>
</dbReference>
<dbReference type="HAMAP" id="MF_00565">
    <property type="entry name" value="DltC"/>
    <property type="match status" value="1"/>
</dbReference>
<dbReference type="InterPro" id="IPR036736">
    <property type="entry name" value="ACP-like_sf"/>
</dbReference>
<dbReference type="InterPro" id="IPR003230">
    <property type="entry name" value="DltC"/>
</dbReference>
<dbReference type="InterPro" id="IPR009081">
    <property type="entry name" value="PP-bd_ACP"/>
</dbReference>
<dbReference type="NCBIfam" id="TIGR01688">
    <property type="entry name" value="dltC"/>
    <property type="match status" value="1"/>
</dbReference>
<dbReference type="NCBIfam" id="NF003464">
    <property type="entry name" value="PRK05087.1"/>
    <property type="match status" value="1"/>
</dbReference>
<dbReference type="Pfam" id="PF00550">
    <property type="entry name" value="PP-binding"/>
    <property type="match status" value="1"/>
</dbReference>
<dbReference type="SUPFAM" id="SSF47336">
    <property type="entry name" value="ACP-like"/>
    <property type="match status" value="1"/>
</dbReference>
<dbReference type="PROSITE" id="PS50075">
    <property type="entry name" value="CARRIER"/>
    <property type="match status" value="1"/>
</dbReference>
<comment type="function">
    <text evidence="1">Carrier protein involved in the D-alanylation of lipoteichoic acid (LTA). The loading of thioester-linked D-alanine onto DltC is catalyzed by D-alanine--D-alanyl carrier protein ligase DltA. The DltC-carried D-alanyl group is further transferred to cell membrane phosphatidylglycerol (PG) by forming an ester bond, probably catalyzed by DltD. D-alanylation of LTA plays an important role in modulating the properties of the cell wall in Gram-positive bacteria, influencing the net charge of the cell wall.</text>
</comment>
<comment type="pathway">
    <text evidence="1">Cell wall biogenesis; lipoteichoic acid biosynthesis.</text>
</comment>
<comment type="subcellular location">
    <subcellularLocation>
        <location evidence="1">Cytoplasm</location>
    </subcellularLocation>
</comment>
<comment type="PTM">
    <text evidence="1">4'-phosphopantetheine is transferred from CoA to a specific serine of apo-DCP.</text>
</comment>
<comment type="similarity">
    <text evidence="1">Belongs to the DltC family.</text>
</comment>
<organism>
    <name type="scientific">Streptococcus pneumoniae (strain Taiwan19F-14)</name>
    <dbReference type="NCBI Taxonomy" id="487213"/>
    <lineage>
        <taxon>Bacteria</taxon>
        <taxon>Bacillati</taxon>
        <taxon>Bacillota</taxon>
        <taxon>Bacilli</taxon>
        <taxon>Lactobacillales</taxon>
        <taxon>Streptococcaceae</taxon>
        <taxon>Streptococcus</taxon>
    </lineage>
</organism>
<accession>C1CU93</accession>
<gene>
    <name evidence="1" type="primary">dltC</name>
    <name type="ordered locus">SPT_2189</name>
</gene>
<proteinExistence type="inferred from homology"/>
<keyword id="KW-0961">Cell wall biogenesis/degradation</keyword>
<keyword id="KW-0963">Cytoplasm</keyword>
<keyword id="KW-0596">Phosphopantetheine</keyword>
<keyword id="KW-0597">Phosphoprotein</keyword>